<dbReference type="EC" id="5.2.1.8"/>
<dbReference type="EMBL" id="BA000003">
    <property type="protein sequence ID" value="BAB13171.1"/>
    <property type="molecule type" value="Genomic_DNA"/>
</dbReference>
<dbReference type="RefSeq" id="NP_240285.1">
    <property type="nucleotide sequence ID" value="NC_002528.1"/>
</dbReference>
<dbReference type="RefSeq" id="WP_010896134.1">
    <property type="nucleotide sequence ID" value="NC_002528.1"/>
</dbReference>
<dbReference type="SMR" id="P57546"/>
<dbReference type="STRING" id="563178.BUAP5A_467"/>
<dbReference type="EnsemblBacteria" id="BAB13171">
    <property type="protein sequence ID" value="BAB13171"/>
    <property type="gene ID" value="BAB13171"/>
</dbReference>
<dbReference type="KEGG" id="buc:BU474"/>
<dbReference type="PATRIC" id="fig|107806.10.peg.483"/>
<dbReference type="eggNOG" id="COG0544">
    <property type="taxonomic scope" value="Bacteria"/>
</dbReference>
<dbReference type="HOGENOM" id="CLU_033058_2_0_6"/>
<dbReference type="Proteomes" id="UP000001806">
    <property type="component" value="Chromosome"/>
</dbReference>
<dbReference type="GO" id="GO:0005737">
    <property type="term" value="C:cytoplasm"/>
    <property type="evidence" value="ECO:0007669"/>
    <property type="project" value="UniProtKB-SubCell"/>
</dbReference>
<dbReference type="GO" id="GO:0003755">
    <property type="term" value="F:peptidyl-prolyl cis-trans isomerase activity"/>
    <property type="evidence" value="ECO:0007669"/>
    <property type="project" value="UniProtKB-UniRule"/>
</dbReference>
<dbReference type="GO" id="GO:0051301">
    <property type="term" value="P:cell division"/>
    <property type="evidence" value="ECO:0007669"/>
    <property type="project" value="UniProtKB-KW"/>
</dbReference>
<dbReference type="GO" id="GO:0006457">
    <property type="term" value="P:protein folding"/>
    <property type="evidence" value="ECO:0007669"/>
    <property type="project" value="UniProtKB-UniRule"/>
</dbReference>
<dbReference type="GO" id="GO:0015031">
    <property type="term" value="P:protein transport"/>
    <property type="evidence" value="ECO:0007669"/>
    <property type="project" value="UniProtKB-UniRule"/>
</dbReference>
<dbReference type="Gene3D" id="3.10.50.40">
    <property type="match status" value="1"/>
</dbReference>
<dbReference type="Gene3D" id="3.30.70.1050">
    <property type="entry name" value="Trigger factor ribosome-binding domain"/>
    <property type="match status" value="1"/>
</dbReference>
<dbReference type="Gene3D" id="1.10.3120.10">
    <property type="entry name" value="Trigger factor, C-terminal domain"/>
    <property type="match status" value="1"/>
</dbReference>
<dbReference type="HAMAP" id="MF_00303">
    <property type="entry name" value="Trigger_factor_Tig"/>
    <property type="match status" value="1"/>
</dbReference>
<dbReference type="InterPro" id="IPR046357">
    <property type="entry name" value="PPIase_dom_sf"/>
</dbReference>
<dbReference type="InterPro" id="IPR005215">
    <property type="entry name" value="Trig_fac"/>
</dbReference>
<dbReference type="InterPro" id="IPR008880">
    <property type="entry name" value="Trigger_fac_C"/>
</dbReference>
<dbReference type="InterPro" id="IPR037041">
    <property type="entry name" value="Trigger_fac_C_sf"/>
</dbReference>
<dbReference type="InterPro" id="IPR008881">
    <property type="entry name" value="Trigger_fac_ribosome-bd_bac"/>
</dbReference>
<dbReference type="InterPro" id="IPR036611">
    <property type="entry name" value="Trigger_fac_ribosome-bd_sf"/>
</dbReference>
<dbReference type="InterPro" id="IPR027304">
    <property type="entry name" value="Trigger_fact/SurA_dom_sf"/>
</dbReference>
<dbReference type="NCBIfam" id="TIGR00115">
    <property type="entry name" value="tig"/>
    <property type="match status" value="1"/>
</dbReference>
<dbReference type="Pfam" id="PF05698">
    <property type="entry name" value="Trigger_C"/>
    <property type="match status" value="1"/>
</dbReference>
<dbReference type="Pfam" id="PF05697">
    <property type="entry name" value="Trigger_N"/>
    <property type="match status" value="1"/>
</dbReference>
<dbReference type="PIRSF" id="PIRSF003095">
    <property type="entry name" value="Trigger_factor"/>
    <property type="match status" value="1"/>
</dbReference>
<dbReference type="SUPFAM" id="SSF54534">
    <property type="entry name" value="FKBP-like"/>
    <property type="match status" value="1"/>
</dbReference>
<dbReference type="SUPFAM" id="SSF109998">
    <property type="entry name" value="Triger factor/SurA peptide-binding domain-like"/>
    <property type="match status" value="1"/>
</dbReference>
<dbReference type="SUPFAM" id="SSF102735">
    <property type="entry name" value="Trigger factor ribosome-binding domain"/>
    <property type="match status" value="1"/>
</dbReference>
<organism>
    <name type="scientific">Buchnera aphidicola subsp. Acyrthosiphon pisum (strain APS)</name>
    <name type="common">Acyrthosiphon pisum symbiotic bacterium</name>
    <dbReference type="NCBI Taxonomy" id="107806"/>
    <lineage>
        <taxon>Bacteria</taxon>
        <taxon>Pseudomonadati</taxon>
        <taxon>Pseudomonadota</taxon>
        <taxon>Gammaproteobacteria</taxon>
        <taxon>Enterobacterales</taxon>
        <taxon>Erwiniaceae</taxon>
        <taxon>Buchnera</taxon>
    </lineage>
</organism>
<name>TIG_BUCAI</name>
<gene>
    <name type="primary">tig</name>
    <name type="ordered locus">BU474</name>
</gene>
<proteinExistence type="inferred from homology"/>
<comment type="function">
    <text evidence="1">Involved in protein export. Acts as a chaperone by maintaining the newly synthesized protein in an open conformation. Functions as a peptidyl-prolyl cis-trans isomerase (By similarity).</text>
</comment>
<comment type="catalytic activity">
    <reaction>
        <text>[protein]-peptidylproline (omega=180) = [protein]-peptidylproline (omega=0)</text>
        <dbReference type="Rhea" id="RHEA:16237"/>
        <dbReference type="Rhea" id="RHEA-COMP:10747"/>
        <dbReference type="Rhea" id="RHEA-COMP:10748"/>
        <dbReference type="ChEBI" id="CHEBI:83833"/>
        <dbReference type="ChEBI" id="CHEBI:83834"/>
        <dbReference type="EC" id="5.2.1.8"/>
    </reaction>
</comment>
<comment type="subcellular location">
    <subcellularLocation>
        <location>Cytoplasm</location>
    </subcellularLocation>
    <text evidence="1">About half TF is bound to the ribosome near the polypeptide exit tunnel while the other half is free in the cytoplasm.</text>
</comment>
<comment type="domain">
    <text evidence="1">Consists of 3 domains; the N-terminus binds the ribosome, the middle domain has PPIase activity, while the C-terminus has intrinsic chaperone activity on its own.</text>
</comment>
<comment type="similarity">
    <text evidence="2">Belongs to the FKBP-type PPIase family. Tig subfamily.</text>
</comment>
<evidence type="ECO:0000250" key="1"/>
<evidence type="ECO:0000305" key="2"/>
<accession>P57546</accession>
<reference key="1">
    <citation type="journal article" date="2000" name="Nature">
        <title>Genome sequence of the endocellular bacterial symbiont of aphids Buchnera sp. APS.</title>
        <authorList>
            <person name="Shigenobu S."/>
            <person name="Watanabe H."/>
            <person name="Hattori M."/>
            <person name="Sakaki Y."/>
            <person name="Ishikawa H."/>
        </authorList>
    </citation>
    <scope>NUCLEOTIDE SEQUENCE [LARGE SCALE GENOMIC DNA]</scope>
    <source>
        <strain>APS</strain>
    </source>
</reference>
<sequence length="442" mass="53483">MNFFMEKNKDAGHRVTIKIPKTTVNNSLLQEFIKIRKTTKINGFRKGKTPIRVIQEKYGSAIYYDIFKKLMQKFFHEFIKTEKIKIIGSPKFYIHQDEDKKKEYFEYSVIYELYPQFQIKDIKQIKVNKINVEITEEDIKKNIETNKNKKNIWNPVNKAVKSYDRVTINYCIYEKNKKIKKFDKDNISFIVSKNTLIPQLNYKIINHFVNDIIFFKIKFHAFHPEKELQNKDITFKIKIIKIEKKQELESEKSNKKNITEKKTIQTDYQTIKNNLHSQINIITDKYLENQIIQKIVEKNILLLPPLLFQKEIKNLYKQYTKQYQEENSNILEKKYHMSLDSEVKKRLYFQIIIEQIILNNKLFADENNIQKLIKKISSNYKNPMEIIKLYNKNKNLKNTMKNIELERQAMLLLKKSIKIEKQNWNFERFLNYNWASHEELML</sequence>
<keyword id="KW-0131">Cell cycle</keyword>
<keyword id="KW-0132">Cell division</keyword>
<keyword id="KW-0143">Chaperone</keyword>
<keyword id="KW-0963">Cytoplasm</keyword>
<keyword id="KW-0413">Isomerase</keyword>
<keyword id="KW-1185">Reference proteome</keyword>
<keyword id="KW-0697">Rotamase</keyword>
<protein>
    <recommendedName>
        <fullName>Trigger factor</fullName>
        <shortName>TF</shortName>
        <ecNumber>5.2.1.8</ecNumber>
    </recommendedName>
    <alternativeName>
        <fullName>PPIase</fullName>
    </alternativeName>
</protein>
<feature type="chain" id="PRO_0000179326" description="Trigger factor">
    <location>
        <begin position="1"/>
        <end position="442"/>
    </location>
</feature>
<feature type="domain" description="PPIase FKBP-type">
    <location>
        <begin position="163"/>
        <end position="248"/>
    </location>
</feature>